<proteinExistence type="evidence at protein level"/>
<evidence type="ECO:0000250" key="1">
    <source>
        <dbReference type="UniProtKB" id="O94985"/>
    </source>
</evidence>
<evidence type="ECO:0000250" key="2">
    <source>
        <dbReference type="UniProtKB" id="Q6Q0N0"/>
    </source>
</evidence>
<evidence type="ECO:0000250" key="3">
    <source>
        <dbReference type="UniProtKB" id="Q99JH7"/>
    </source>
</evidence>
<evidence type="ECO:0000255" key="4"/>
<evidence type="ECO:0000255" key="5">
    <source>
        <dbReference type="PROSITE-ProRule" id="PRU00043"/>
    </source>
</evidence>
<evidence type="ECO:0000256" key="6">
    <source>
        <dbReference type="SAM" id="MobiDB-lite"/>
    </source>
</evidence>
<evidence type="ECO:0000269" key="7">
    <source>
    </source>
</evidence>
<evidence type="ECO:0000269" key="8">
    <source>
    </source>
</evidence>
<evidence type="ECO:0000269" key="9">
    <source>
    </source>
</evidence>
<evidence type="ECO:0000269" key="10">
    <source>
    </source>
</evidence>
<evidence type="ECO:0000269" key="11">
    <source>
    </source>
</evidence>
<evidence type="ECO:0000269" key="12">
    <source>
    </source>
</evidence>
<evidence type="ECO:0000269" key="13">
    <source>
    </source>
</evidence>
<evidence type="ECO:0000269" key="14">
    <source>
    </source>
</evidence>
<evidence type="ECO:0000303" key="15">
    <source>
    </source>
</evidence>
<evidence type="ECO:0000303" key="16">
    <source>
    </source>
</evidence>
<evidence type="ECO:0000303" key="17">
    <source>
    </source>
</evidence>
<evidence type="ECO:0000305" key="18"/>
<evidence type="ECO:0000312" key="19">
    <source>
        <dbReference type="MGI" id="MGI:1929895"/>
    </source>
</evidence>
<sequence length="979" mass="108900">MLRRPAPALAPAVRLLLAGLLCGGGVWAARVNKHKPWLEPTYHGIVTENDNTVLLDPPLIALDKDSPLRFAESFEVTVTKEGEICGFKIHGQNVPFDAVVVDKSTGEGIIRSKEKLDCELQKDYTFTIQAYDCGKGPDGTGVKKSHKATVHIQVNDVNEYAPVFKEKSYKAAVVEGKQHSSILRVEAVDADCSPQFSQICSYEILTPDVPFTVDKDGYIKNTEKLNYGKEHQYKLTVTAYDCGKKRATEDVLVKISVKPTCSPGWQGWSSRIEYEPGTGALAVFPSIHLETCDEPVASVQATVELETSHIGKGCDRDTYSEKSLHRLCGAAAGTSELLPSPSSSFNWTVGLPTDNGHDSDQVFEFNGTQAVRIPDGVVTLDPKEPFTISVWMRHGPFGRKKETILCSSDKTDMNRHHYSLYVHGCRLVFLLRQDPSEEKKYRPAEFHWKLNQVCDEDWHHFVLNVEVPSVTLYVDGIPHEPFSVTEDYPLHPTKIETQLVVGACWQEYSGVESGNETEPATMASAGGDLHMTQFFRGNLAGLTVRSGKLADKKVIDCLYTCKEGLDLQVPEDANRGVQIQASSSQAVLTLEGDNVGELDKAMQHISYLNSRQFPTPGIRRLKITSTVKCFNEAACIEVPPVEGYVMVLQPEEPKISLSGVHHFARAASEFESAEGISLFPELRIISTITREVEPEADGSEDPTVQESLVSEEIVHDLDTCEVTVEGDELNAEQESLEVDVTRLQQKGIEASHSDLGVVFTGVETMASYEEVLHLLRYRNWHTRSLLDRKFKLICSELNGRYLSNEFKVEVNVIHTANPVEHANHMAAQPQFVHPEHRSFVDLSGHNLANPHPFAVVPSTATVVIVVCVSFLVFMIILGVFRIRAAHQRTMRDQDTGKENEMDWDDSALTITVNPMETYEDQHSSEEEEEEEEEEESEDGEEEEDITSAESESSEEEEGGPGDGQNATRQLEWDDSTLSY</sequence>
<comment type="function">
    <text evidence="3 7 9 12 13">Postsynaptic adhesion molecule that binds to presynaptic neurexins to mediate both excitatory and inhibitory synapse formation (PubMed:11161476, PubMed:24613359). Promotes synapse development by acting as a cell adhesion molecule at the postsynaptic membrane, which associates with neurexin-alpha at the presynaptic membrane (By similarity). Also functions as a cargo in axonal anterograde transport by acting as a molecular adapter that promotes KLC1 association with vesicles (PubMed:17332754). Complex formation with APBA2 and APP, stabilizes APP metabolism and enhances APBA2-mediated suppression of beta-APP40 secretion, due to the retardation of intracellular APP maturation (PubMed:11161476, PubMed:12972431).</text>
</comment>
<comment type="function">
    <molecule>Soluble Alc-alpha</molecule>
    <text evidence="7 9">As intracellular fragment AlcICD, suppresses APBB1-dependent transactivation stimulated by APP C-terminal intracellular fragment (AICD), most probably by competing with AICD for APBB1-binding.</text>
</comment>
<comment type="function">
    <molecule>CTF1-alpha</molecule>
    <text evidence="7 9">In complex with APBA2 and C99, a C-terminal APP fragment, abolishes C99 interaction with PSEN1 and thus APP C99 cleavage by gamma-secretase, most probably through stabilization of the direct interaction between APBA2 and APP.</text>
</comment>
<comment type="subunit">
    <text evidence="9 11 12">Directly interacts with APBA2 (PubMed:12972431). Forms a tripartite complex with APBA2 and APP (PubMed:12972431). The CTF1 chain interacts with PSEN1. Interacts with KLC1 and APBB1 (PubMed:16760430, PubMed:17332754).</text>
</comment>
<comment type="subunit">
    <molecule>Soluble Alc-alpha</molecule>
    <text evidence="1">Interacts with APBB1; this interaction stabilizes AlcICD metabolism.</text>
</comment>
<comment type="subunit">
    <molecule>CTF1-alpha</molecule>
    <text evidence="1">Interacts with PSEN1.</text>
</comment>
<comment type="interaction">
    <interactant intactId="EBI-2013142">
        <id>Q9EPL2</id>
    </interactant>
    <interactant intactId="EBI-6271950">
        <id>Q8CD76</id>
        <label>Klc1</label>
    </interactant>
    <organismsDiffer>false</organismsDiffer>
    <experiments>3</experiments>
</comment>
<comment type="subcellular location">
    <subcellularLocation>
        <location evidence="13">Postsynaptic cell membrane</location>
        <topology evidence="4">Single-pass type I membrane protein</topology>
    </subcellularLocation>
    <subcellularLocation>
        <location evidence="9">Endoplasmic reticulum membrane</location>
        <topology>Single-pass type I membrane protein</topology>
    </subcellularLocation>
    <subcellularLocation>
        <location evidence="1">Golgi apparatus membrane</location>
        <topology evidence="4">Single-pass type I membrane protein</topology>
    </subcellularLocation>
    <subcellularLocation>
        <location evidence="9 12">Cell projection</location>
        <location evidence="9 12">Neuron projection</location>
    </subcellularLocation>
    <subcellularLocation>
        <location evidence="12">Vesicle</location>
    </subcellularLocation>
    <text evidence="13">Localized in the postsynaptic membrane of both excitatory and inhibitory synapses.</text>
</comment>
<comment type="subcellular location">
    <molecule>Soluble Alc-alpha</molecule>
    <subcellularLocation>
        <location evidence="1">Nucleus</location>
    </subcellularLocation>
    <text evidence="1">The AlcICD fragment is translocated to the nucleus upon interaction with APBB1.</text>
</comment>
<comment type="alternative products">
    <event type="alternative splicing"/>
    <isoform>
        <id>Q9EPL2-1</id>
        <name>1</name>
        <sequence type="displayed"/>
    </isoform>
    <isoform>
        <id>Q9EPL2-2</id>
        <name>2</name>
        <sequence type="described" ref="VSP_032036"/>
    </isoform>
</comment>
<comment type="tissue specificity">
    <text evidence="8 9 11">Highly expressed in the brain (at protein level), with over 90% of the neurons expressing detectable amounts. In the brain, relatively high levels in the cerebral cortex, striatum, hippocampus and thalamus. Moderate levels in the cerebellum. Low levels in the olfactory bulb, midbrain and pons (at protein level). Not detected in Purkinje cells. Expressed at low levels in the lung (at protein level). At the mRNA level, weakly detected in the kidney, lung, skeletal muscle, heart and testis. Not expressed in the sciatic nerve fiber.</text>
</comment>
<comment type="developmental stage">
    <text evidence="11">Expression in the brain gradually increases during the first postnatal week, reaching a peak at P7. In the gray matter, highly expressed in both developing and adult brain. In the white matter, at P6 highly expressed in all major fiber tracts, including the anterior commissure and the corpus callosum, as well as the external and internal capsules, while in the adult, axonal expression in fiber tracts is only faint (at protein level).</text>
</comment>
<comment type="domain">
    <text evidence="7">The cytoplasmic domain binds synaptic Ca(2+).</text>
</comment>
<comment type="PTM">
    <text evidence="7 10">Proteolytically processed under normal cellular conditions (PubMed:11161476, PubMed:15037614). A primary zeta-cleavage generates a large extracellular (soluble) N-terminal domain (sAlc) and a short C-terminal transmembrane fragment (CTF1) (PubMed:11161476, PubMed:15037614). A secondary cleavage catalyzed by presenilin gamma-secretase within the transmembrane domain releases the beta-Alc-alpha chain in the extracellular milieu and produces an intracellular fragment (AlcICD) (PubMed:11161476, PubMed:15037614). Beta-Alc-alpha secretion is largely dependent upon PSEN1 and PSEN2 (PubMed:11161476, PubMed:15037614). This processing is strongly suppressed in the tripartite complex formed with APBA2 and APP, which seems to prevent the association with PSEN1 (PubMed:11161476, PubMed:15037614).</text>
</comment>
<comment type="disruption phenotype">
    <text evidence="14">Mice lacking Clstn1, Clstn2 and Clstn3 display behavior disorders, characterized by hyperactivity in normal environment, hypersensitivity to stress, and show tendency to freeze in novel environments.</text>
</comment>
<comment type="similarity">
    <text evidence="18">Belongs to the calsyntenin family.</text>
</comment>
<comment type="sequence caution" evidence="18">
    <conflict type="erroneous initiation">
        <sequence resource="EMBL-CDS" id="BAD32337"/>
    </conflict>
    <text>Extended N-terminus.</text>
</comment>
<protein>
    <recommendedName>
        <fullName evidence="18">Calsyntenin-1</fullName>
    </recommendedName>
    <alternativeName>
        <fullName evidence="17">Alcadein-alpha</fullName>
        <shortName evidence="17">Alc-alpha</shortName>
    </alternativeName>
    <component>
        <recommendedName>
            <fullName evidence="1">Soluble Alc-alpha</fullName>
            <shortName evidence="1">SAlc-alpha</shortName>
        </recommendedName>
    </component>
    <component>
        <recommendedName>
            <fullName evidence="1">CTF1-alpha</fullName>
        </recommendedName>
        <alternativeName>
            <fullName evidence="1">C-terminal fragment 1-alpha</fullName>
        </alternativeName>
    </component>
</protein>
<feature type="signal peptide" evidence="1">
    <location>
        <begin position="1"/>
        <end position="28"/>
    </location>
</feature>
<feature type="chain" id="PRO_0000004022" description="Calsyntenin-1">
    <location>
        <begin position="29"/>
        <end position="979"/>
    </location>
</feature>
<feature type="chain" id="PRO_0000323599" description="Soluble Alc-alpha" evidence="1">
    <location>
        <begin position="29"/>
        <end position="825"/>
    </location>
</feature>
<feature type="chain" id="PRO_0000323600" description="CTF1-alpha" evidence="1">
    <location>
        <begin position="826"/>
        <end position="979"/>
    </location>
</feature>
<feature type="topological domain" description="Extracellular" evidence="4">
    <location>
        <begin position="29"/>
        <end position="859"/>
    </location>
</feature>
<feature type="transmembrane region" description="Helical" evidence="4">
    <location>
        <begin position="860"/>
        <end position="880"/>
    </location>
</feature>
<feature type="topological domain" description="Cytoplasmic" evidence="4">
    <location>
        <begin position="881"/>
        <end position="979"/>
    </location>
</feature>
<feature type="domain" description="Cadherin 1" evidence="5">
    <location>
        <begin position="38"/>
        <end position="164"/>
    </location>
</feature>
<feature type="domain" description="Cadherin 2" evidence="5">
    <location>
        <begin position="165"/>
        <end position="265"/>
    </location>
</feature>
<feature type="region of interest" description="Disordered" evidence="6">
    <location>
        <begin position="915"/>
        <end position="979"/>
    </location>
</feature>
<feature type="compositionally biased region" description="Acidic residues" evidence="6">
    <location>
        <begin position="925"/>
        <end position="959"/>
    </location>
</feature>
<feature type="site" description="Cleavage" evidence="2">
    <location>
        <begin position="824"/>
        <end position="825"/>
    </location>
</feature>
<feature type="site" description="Cleavage" evidence="2">
    <location>
        <begin position="853"/>
        <end position="854"/>
    </location>
</feature>
<feature type="glycosylation site" description="N-linked (GlcNAc...) asparagine" evidence="4">
    <location>
        <position position="346"/>
    </location>
</feature>
<feature type="glycosylation site" description="N-linked (GlcNAc...) asparagine" evidence="4">
    <location>
        <position position="366"/>
    </location>
</feature>
<feature type="glycosylation site" description="N-linked (GlcNAc...) asparagine" evidence="4">
    <location>
        <position position="515"/>
    </location>
</feature>
<feature type="splice variant" id="VSP_032036" description="In isoform 2." evidence="15 16">
    <location>
        <begin position="72"/>
        <end position="81"/>
    </location>
</feature>
<feature type="mutagenesis site" description="Marked reduction in KLC1-binding." evidence="11">
    <original>E</original>
    <variation>A</variation>
    <location>
        <position position="900"/>
    </location>
</feature>
<feature type="mutagenesis site" description="Almost completely abolishes KLC1-binding." evidence="11">
    <original>M</original>
    <variation>A</variation>
    <location>
        <position position="901"/>
    </location>
</feature>
<feature type="mutagenesis site" description="Marked reduction in KLC1-binding." evidence="11">
    <original>D</original>
    <variation>A</variation>
    <location>
        <position position="902"/>
    </location>
</feature>
<feature type="mutagenesis site" description="Marked reduction in KLC1-binding; when associated with A-972. Marked alteration in anterograde axonal transport." evidence="11">
    <original>W</original>
    <variation>A</variation>
    <location>
        <position position="903"/>
    </location>
</feature>
<feature type="mutagenesis site" description="Almost completely abolishes KLC1-binding." evidence="11">
    <original>D</original>
    <variation>A</variation>
    <location>
        <position position="904"/>
    </location>
</feature>
<feature type="mutagenesis site" description="Almost completely abolishes KLC1-binding." evidence="11">
    <original>D</original>
    <variation>A</variation>
    <location>
        <position position="905"/>
    </location>
</feature>
<feature type="mutagenesis site" description="Marked reduction in KLC1-binding; when associated with A-903. Marked alteration in anterograde axonal transport." evidence="11">
    <original>W</original>
    <variation>A</variation>
    <location>
        <position position="972"/>
    </location>
</feature>
<dbReference type="EMBL" id="AJ289016">
    <property type="protein sequence ID" value="CAC17788.1"/>
    <property type="molecule type" value="mRNA"/>
</dbReference>
<dbReference type="EMBL" id="AK173059">
    <property type="protein sequence ID" value="BAD32337.1"/>
    <property type="status" value="ALT_INIT"/>
    <property type="molecule type" value="mRNA"/>
</dbReference>
<dbReference type="EMBL" id="AL607078">
    <property type="status" value="NOT_ANNOTATED_CDS"/>
    <property type="molecule type" value="Genomic_DNA"/>
</dbReference>
<dbReference type="EMBL" id="CU207384">
    <property type="status" value="NOT_ANNOTATED_CDS"/>
    <property type="molecule type" value="Genomic_DNA"/>
</dbReference>
<dbReference type="EMBL" id="CU210912">
    <property type="status" value="NOT_ANNOTATED_CDS"/>
    <property type="molecule type" value="Genomic_DNA"/>
</dbReference>
<dbReference type="EMBL" id="BC029027">
    <property type="protein sequence ID" value="AAH29027.1"/>
    <property type="molecule type" value="mRNA"/>
</dbReference>
<dbReference type="EMBL" id="BC053843">
    <property type="protein sequence ID" value="AAH53843.1"/>
    <property type="molecule type" value="mRNA"/>
</dbReference>
<dbReference type="CCDS" id="CCDS18963.1">
    <molecule id="Q9EPL2-1"/>
</dbReference>
<dbReference type="CCDS" id="CCDS71522.1">
    <molecule id="Q9EPL2-2"/>
</dbReference>
<dbReference type="RefSeq" id="NP_001277918.1">
    <molecule id="Q9EPL2-2"/>
    <property type="nucleotide sequence ID" value="NM_001290989.1"/>
</dbReference>
<dbReference type="RefSeq" id="NP_075538.1">
    <molecule id="Q9EPL2-1"/>
    <property type="nucleotide sequence ID" value="NM_023051.5"/>
</dbReference>
<dbReference type="PDB" id="6F9I">
    <property type="method" value="X-ray"/>
    <property type="resolution" value="3.99 A"/>
    <property type="chains" value="C/X=965-979"/>
</dbReference>
<dbReference type="PDBsum" id="6F9I"/>
<dbReference type="SMR" id="Q9EPL2"/>
<dbReference type="BioGRID" id="211147">
    <property type="interactions" value="11"/>
</dbReference>
<dbReference type="ELM" id="Q9EPL2"/>
<dbReference type="FunCoup" id="Q9EPL2">
    <property type="interactions" value="855"/>
</dbReference>
<dbReference type="IntAct" id="Q9EPL2">
    <property type="interactions" value="53"/>
</dbReference>
<dbReference type="MINT" id="Q9EPL2"/>
<dbReference type="STRING" id="10090.ENSMUSP00000036962"/>
<dbReference type="GlyCosmos" id="Q9EPL2">
    <property type="glycosylation" value="3 sites, No reported glycans"/>
</dbReference>
<dbReference type="GlyGen" id="Q9EPL2">
    <property type="glycosylation" value="4 sites"/>
</dbReference>
<dbReference type="iPTMnet" id="Q9EPL2"/>
<dbReference type="PhosphoSitePlus" id="Q9EPL2"/>
<dbReference type="SwissPalm" id="Q9EPL2"/>
<dbReference type="PaxDb" id="10090-ENSMUSP00000036962"/>
<dbReference type="PeptideAtlas" id="Q9EPL2"/>
<dbReference type="ProteomicsDB" id="277907">
    <molecule id="Q9EPL2-1"/>
</dbReference>
<dbReference type="ProteomicsDB" id="277908">
    <molecule id="Q9EPL2-2"/>
</dbReference>
<dbReference type="Pumba" id="Q9EPL2"/>
<dbReference type="Antibodypedia" id="2632">
    <property type="antibodies" value="178 antibodies from 27 providers"/>
</dbReference>
<dbReference type="DNASU" id="65945"/>
<dbReference type="Ensembl" id="ENSMUST00000039144.7">
    <molecule id="Q9EPL2-1"/>
    <property type="protein sequence ID" value="ENSMUSP00000036962.7"/>
    <property type="gene ID" value="ENSMUSG00000039953.14"/>
</dbReference>
<dbReference type="Ensembl" id="ENSMUST00000105691.8">
    <molecule id="Q9EPL2-2"/>
    <property type="protein sequence ID" value="ENSMUSP00000101316.2"/>
    <property type="gene ID" value="ENSMUSG00000039953.14"/>
</dbReference>
<dbReference type="GeneID" id="65945"/>
<dbReference type="KEGG" id="mmu:65945"/>
<dbReference type="UCSC" id="uc008vwo.2">
    <molecule id="Q9EPL2-1"/>
    <property type="organism name" value="mouse"/>
</dbReference>
<dbReference type="UCSC" id="uc008vwp.2">
    <molecule id="Q9EPL2-2"/>
    <property type="organism name" value="mouse"/>
</dbReference>
<dbReference type="AGR" id="MGI:1929895"/>
<dbReference type="CTD" id="22883"/>
<dbReference type="MGI" id="MGI:1929895">
    <property type="gene designation" value="Clstn1"/>
</dbReference>
<dbReference type="VEuPathDB" id="HostDB:ENSMUSG00000039953"/>
<dbReference type="eggNOG" id="KOG1834">
    <property type="taxonomic scope" value="Eukaryota"/>
</dbReference>
<dbReference type="GeneTree" id="ENSGT00950000183086"/>
<dbReference type="HOGENOM" id="CLU_008904_0_0_1"/>
<dbReference type="InParanoid" id="Q9EPL2"/>
<dbReference type="OMA" id="CWQGSDN"/>
<dbReference type="OrthoDB" id="10012272at2759"/>
<dbReference type="PhylomeDB" id="Q9EPL2"/>
<dbReference type="TreeFam" id="TF315946"/>
<dbReference type="BioGRID-ORCS" id="65945">
    <property type="hits" value="1 hit in 78 CRISPR screens"/>
</dbReference>
<dbReference type="CD-CODE" id="CE726F99">
    <property type="entry name" value="Postsynaptic density"/>
</dbReference>
<dbReference type="ChiTaRS" id="Clstn1">
    <property type="organism name" value="mouse"/>
</dbReference>
<dbReference type="PRO" id="PR:Q9EPL2"/>
<dbReference type="Proteomes" id="UP000000589">
    <property type="component" value="Chromosome 4"/>
</dbReference>
<dbReference type="RNAct" id="Q9EPL2">
    <property type="molecule type" value="protein"/>
</dbReference>
<dbReference type="Bgee" id="ENSMUSG00000039953">
    <property type="expression patterns" value="Expressed in floor plate of midbrain and 251 other cell types or tissues"/>
</dbReference>
<dbReference type="GO" id="GO:0009986">
    <property type="term" value="C:cell surface"/>
    <property type="evidence" value="ECO:0000314"/>
    <property type="project" value="MGI"/>
</dbReference>
<dbReference type="GO" id="GO:0005789">
    <property type="term" value="C:endoplasmic reticulum membrane"/>
    <property type="evidence" value="ECO:0007669"/>
    <property type="project" value="UniProtKB-SubCell"/>
</dbReference>
<dbReference type="GO" id="GO:0005576">
    <property type="term" value="C:extracellular region"/>
    <property type="evidence" value="ECO:0000314"/>
    <property type="project" value="UniProtKB"/>
</dbReference>
<dbReference type="GO" id="GO:0098978">
    <property type="term" value="C:glutamatergic synapse"/>
    <property type="evidence" value="ECO:0000314"/>
    <property type="project" value="SynGO"/>
</dbReference>
<dbReference type="GO" id="GO:0000139">
    <property type="term" value="C:Golgi membrane"/>
    <property type="evidence" value="ECO:0007669"/>
    <property type="project" value="UniProtKB-SubCell"/>
</dbReference>
<dbReference type="GO" id="GO:0016020">
    <property type="term" value="C:membrane"/>
    <property type="evidence" value="ECO:0000314"/>
    <property type="project" value="MGI"/>
</dbReference>
<dbReference type="GO" id="GO:0043005">
    <property type="term" value="C:neuron projection"/>
    <property type="evidence" value="ECO:0007669"/>
    <property type="project" value="UniProtKB-SubCell"/>
</dbReference>
<dbReference type="GO" id="GO:0005634">
    <property type="term" value="C:nucleus"/>
    <property type="evidence" value="ECO:0007669"/>
    <property type="project" value="UniProtKB-SubCell"/>
</dbReference>
<dbReference type="GO" id="GO:0014069">
    <property type="term" value="C:postsynaptic density"/>
    <property type="evidence" value="ECO:0000314"/>
    <property type="project" value="MGI"/>
</dbReference>
<dbReference type="GO" id="GO:0098845">
    <property type="term" value="C:postsynaptic endosome"/>
    <property type="evidence" value="ECO:0000314"/>
    <property type="project" value="SynGO"/>
</dbReference>
<dbReference type="GO" id="GO:0045211">
    <property type="term" value="C:postsynaptic membrane"/>
    <property type="evidence" value="ECO:0000314"/>
    <property type="project" value="UniProtKB"/>
</dbReference>
<dbReference type="GO" id="GO:0001540">
    <property type="term" value="F:amyloid-beta binding"/>
    <property type="evidence" value="ECO:0007669"/>
    <property type="project" value="Ensembl"/>
</dbReference>
<dbReference type="GO" id="GO:0005509">
    <property type="term" value="F:calcium ion binding"/>
    <property type="evidence" value="ECO:0000303"/>
    <property type="project" value="UniProtKB"/>
</dbReference>
<dbReference type="GO" id="GO:0019894">
    <property type="term" value="F:kinesin binding"/>
    <property type="evidence" value="ECO:0007669"/>
    <property type="project" value="Ensembl"/>
</dbReference>
<dbReference type="GO" id="GO:0042988">
    <property type="term" value="F:X11-like protein binding"/>
    <property type="evidence" value="ECO:0007669"/>
    <property type="project" value="Ensembl"/>
</dbReference>
<dbReference type="GO" id="GO:0007268">
    <property type="term" value="P:chemical synaptic transmission"/>
    <property type="evidence" value="ECO:0000303"/>
    <property type="project" value="UniProtKB"/>
</dbReference>
<dbReference type="GO" id="GO:0007156">
    <property type="term" value="P:homophilic cell adhesion via plasma membrane adhesion molecules"/>
    <property type="evidence" value="ECO:0007669"/>
    <property type="project" value="InterPro"/>
</dbReference>
<dbReference type="GO" id="GO:0006874">
    <property type="term" value="P:intracellular calcium ion homeostasis"/>
    <property type="evidence" value="ECO:0000304"/>
    <property type="project" value="MGI"/>
</dbReference>
<dbReference type="GO" id="GO:0098969">
    <property type="term" value="P:neurotransmitter receptor transport to postsynaptic membrane"/>
    <property type="evidence" value="ECO:0000314"/>
    <property type="project" value="SynGO"/>
</dbReference>
<dbReference type="GO" id="GO:0051965">
    <property type="term" value="P:positive regulation of synapse assembly"/>
    <property type="evidence" value="ECO:0000316"/>
    <property type="project" value="MGI"/>
</dbReference>
<dbReference type="GO" id="GO:0050806">
    <property type="term" value="P:positive regulation of synaptic transmission"/>
    <property type="evidence" value="ECO:0000316"/>
    <property type="project" value="MGI"/>
</dbReference>
<dbReference type="GO" id="GO:0001558">
    <property type="term" value="P:regulation of cell growth"/>
    <property type="evidence" value="ECO:0000316"/>
    <property type="project" value="MGI"/>
</dbReference>
<dbReference type="GO" id="GO:0090128">
    <property type="term" value="P:regulation of synapse maturation"/>
    <property type="evidence" value="ECO:0000314"/>
    <property type="project" value="SynGO"/>
</dbReference>
<dbReference type="GO" id="GO:0099003">
    <property type="term" value="P:vesicle-mediated transport in synapse"/>
    <property type="evidence" value="ECO:0000314"/>
    <property type="project" value="SynGO"/>
</dbReference>
<dbReference type="CDD" id="cd11304">
    <property type="entry name" value="Cadherin_repeat"/>
    <property type="match status" value="2"/>
</dbReference>
<dbReference type="FunFam" id="2.60.120.200:FF:000036">
    <property type="entry name" value="Calsyntenin 1"/>
    <property type="match status" value="1"/>
</dbReference>
<dbReference type="FunFam" id="2.60.40.60:FF:000025">
    <property type="entry name" value="Calsyntenin 1"/>
    <property type="match status" value="1"/>
</dbReference>
<dbReference type="FunFam" id="2.60.40.60:FF:000062">
    <property type="entry name" value="Calsyntenin 3"/>
    <property type="match status" value="1"/>
</dbReference>
<dbReference type="Gene3D" id="2.60.120.200">
    <property type="match status" value="1"/>
</dbReference>
<dbReference type="Gene3D" id="2.60.40.60">
    <property type="entry name" value="Cadherins"/>
    <property type="match status" value="2"/>
</dbReference>
<dbReference type="InterPro" id="IPR002126">
    <property type="entry name" value="Cadherin-like_dom"/>
</dbReference>
<dbReference type="InterPro" id="IPR015919">
    <property type="entry name" value="Cadherin-like_sf"/>
</dbReference>
<dbReference type="InterPro" id="IPR045588">
    <property type="entry name" value="CLSTN_C"/>
</dbReference>
<dbReference type="InterPro" id="IPR013320">
    <property type="entry name" value="ConA-like_dom_sf"/>
</dbReference>
<dbReference type="PANTHER" id="PTHR14139">
    <property type="entry name" value="CALSYNTENIN"/>
    <property type="match status" value="1"/>
</dbReference>
<dbReference type="PANTHER" id="PTHR14139:SF4">
    <property type="entry name" value="CALSYNTENIN-1"/>
    <property type="match status" value="1"/>
</dbReference>
<dbReference type="Pfam" id="PF00028">
    <property type="entry name" value="Cadherin"/>
    <property type="match status" value="1"/>
</dbReference>
<dbReference type="Pfam" id="PF19699">
    <property type="entry name" value="CLSTN_C"/>
    <property type="match status" value="1"/>
</dbReference>
<dbReference type="PRINTS" id="PR00205">
    <property type="entry name" value="CADHERIN"/>
</dbReference>
<dbReference type="SMART" id="SM00112">
    <property type="entry name" value="CA"/>
    <property type="match status" value="2"/>
</dbReference>
<dbReference type="SUPFAM" id="SSF49313">
    <property type="entry name" value="Cadherin-like"/>
    <property type="match status" value="2"/>
</dbReference>
<dbReference type="SUPFAM" id="SSF49899">
    <property type="entry name" value="Concanavalin A-like lectins/glucanases"/>
    <property type="match status" value="1"/>
</dbReference>
<dbReference type="PROSITE" id="PS50268">
    <property type="entry name" value="CADHERIN_2"/>
    <property type="match status" value="2"/>
</dbReference>
<gene>
    <name evidence="19" type="primary">Clstn1</name>
    <name type="synonym">Cs1</name>
    <name type="synonym">Cstn1</name>
    <name evidence="15" type="synonym">Kiaa0911</name>
</gene>
<reference key="1">
    <citation type="journal article" date="2001" name="Mol. Cell. Neurosci.">
        <title>Calsyntenin-1, a proteolytically processed postsynaptic membrane protein with a cytoplasmic calcium-binding domain.</title>
        <authorList>
            <person name="Vogt L."/>
            <person name="Schrimpf S.P."/>
            <person name="Meskenaite V."/>
            <person name="Frischknecht R."/>
            <person name="Kinter J."/>
            <person name="Leone D.P."/>
            <person name="Ziegler U."/>
            <person name="Sonderegger P."/>
        </authorList>
    </citation>
    <scope>NUCLEOTIDE SEQUENCE [MRNA] (ISOFORM 1)</scope>
    <scope>FUNCTION</scope>
    <scope>DOMAIN</scope>
    <scope>PARTIAL PROTEIN SEQUENCE</scope>
    <scope>CLEAVAGE</scope>
    <source>
        <strain>BALB/cJ</strain>
        <tissue>Brain</tissue>
    </source>
</reference>
<reference key="2">
    <citation type="journal article" date="2004" name="DNA Res.">
        <title>Prediction of the coding sequences of mouse homologues of KIAA gene: IV. The complete nucleotide sequences of 500 mouse KIAA-homologous cDNAs identified by screening of terminal sequences of cDNA clones randomly sampled from size-fractionated libraries.</title>
        <authorList>
            <person name="Okazaki N."/>
            <person name="Kikuno R."/>
            <person name="Ohara R."/>
            <person name="Inamoto S."/>
            <person name="Koseki H."/>
            <person name="Hiraoka S."/>
            <person name="Saga Y."/>
            <person name="Seino S."/>
            <person name="Nishimura M."/>
            <person name="Kaisho T."/>
            <person name="Hoshino K."/>
            <person name="Kitamura H."/>
            <person name="Nagase T."/>
            <person name="Ohara O."/>
            <person name="Koga H."/>
        </authorList>
    </citation>
    <scope>NUCLEOTIDE SEQUENCE [LARGE SCALE MRNA] (ISOFORM 2)</scope>
    <source>
        <tissue>Brain</tissue>
    </source>
</reference>
<reference key="3">
    <citation type="journal article" date="2009" name="PLoS Biol.">
        <title>Lineage-specific biology revealed by a finished genome assembly of the mouse.</title>
        <authorList>
            <person name="Church D.M."/>
            <person name="Goodstadt L."/>
            <person name="Hillier L.W."/>
            <person name="Zody M.C."/>
            <person name="Goldstein S."/>
            <person name="She X."/>
            <person name="Bult C.J."/>
            <person name="Agarwala R."/>
            <person name="Cherry J.L."/>
            <person name="DiCuccio M."/>
            <person name="Hlavina W."/>
            <person name="Kapustin Y."/>
            <person name="Meric P."/>
            <person name="Maglott D."/>
            <person name="Birtle Z."/>
            <person name="Marques A.C."/>
            <person name="Graves T."/>
            <person name="Zhou S."/>
            <person name="Teague B."/>
            <person name="Potamousis K."/>
            <person name="Churas C."/>
            <person name="Place M."/>
            <person name="Herschleb J."/>
            <person name="Runnheim R."/>
            <person name="Forrest D."/>
            <person name="Amos-Landgraf J."/>
            <person name="Schwartz D.C."/>
            <person name="Cheng Z."/>
            <person name="Lindblad-Toh K."/>
            <person name="Eichler E.E."/>
            <person name="Ponting C.P."/>
        </authorList>
    </citation>
    <scope>NUCLEOTIDE SEQUENCE [LARGE SCALE GENOMIC DNA]</scope>
    <source>
        <strain>C57BL/6J</strain>
    </source>
</reference>
<reference key="4">
    <citation type="journal article" date="2004" name="Genome Res.">
        <title>The status, quality, and expansion of the NIH full-length cDNA project: the Mammalian Gene Collection (MGC).</title>
        <authorList>
            <consortium name="The MGC Project Team"/>
        </authorList>
    </citation>
    <scope>NUCLEOTIDE SEQUENCE [LARGE SCALE MRNA] (ISOFORM 2)</scope>
    <source>
        <strain>C57BL/6J</strain>
        <tissue>Olfactory epithelium</tissue>
        <tissue>Retina</tissue>
    </source>
</reference>
<reference key="5">
    <citation type="journal article" date="2002" name="Mol. Cell. Neurosci.">
        <title>The calsyntenins - a family of postsynaptic membrane proteins with distinct neuronal expression patterns.</title>
        <authorList>
            <person name="Hintsch G."/>
            <person name="Zurlinden A."/>
            <person name="Meskenaite V."/>
            <person name="Steuble M."/>
            <person name="Fink-Widmer K."/>
            <person name="Kinter J."/>
            <person name="Sonderegger P."/>
        </authorList>
    </citation>
    <scope>TISSUE SPECIFICITY</scope>
</reference>
<reference key="6">
    <citation type="journal article" date="2003" name="J. Biol. Chem.">
        <title>Novel cadherin-related membrane proteins, Alcadeins, enhance the X11-like protein-mediated stabilization of amyloid beta-protein precursor metabolism.</title>
        <authorList>
            <person name="Araki Y."/>
            <person name="Tomita S."/>
            <person name="Yamaguchi H."/>
            <person name="Miyagi N."/>
            <person name="Sumioka A."/>
            <person name="Kirino Y."/>
            <person name="Suzuki T."/>
        </authorList>
    </citation>
    <scope>FUNCTION</scope>
    <scope>TISSUE SPECIFICITY</scope>
    <scope>SUBCELLULAR LOCATION</scope>
    <scope>INTERACTION WITH APBA2</scope>
</reference>
<reference key="7">
    <citation type="journal article" date="2004" name="J. Biol. Chem.">
        <title>Coordinated metabolism of Alcadein and amyloid beta-protein precursor regulates FE65-dependent gene transactivation.</title>
        <authorList>
            <person name="Araki Y."/>
            <person name="Miyagi N."/>
            <person name="Kato N."/>
            <person name="Yoshida T."/>
            <person name="Wada S."/>
            <person name="Nishimura M."/>
            <person name="Komano H."/>
            <person name="Yamamoto T."/>
            <person name="De Strooper B."/>
            <person name="Yamamoto K."/>
            <person name="Suzuki T."/>
        </authorList>
    </citation>
    <scope>PROTEOLYTIC CLEAVAGE</scope>
    <scope>GLYCOSYLATION</scope>
</reference>
<reference key="8">
    <citation type="journal article" date="2006" name="Mol. Biol. Cell">
        <title>Calsyntenin-1 docks vesicular cargo to kinesin-1.</title>
        <authorList>
            <person name="Konecna A."/>
            <person name="Frischknecht R."/>
            <person name="Kinter J."/>
            <person name="Ludwig A."/>
            <person name="Steuble M."/>
            <person name="Meskenaite V."/>
            <person name="Indermuehle M."/>
            <person name="Engel M."/>
            <person name="Cen C."/>
            <person name="Mateos J.-M."/>
            <person name="Streit P."/>
            <person name="Sonderegger P."/>
        </authorList>
    </citation>
    <scope>INTERACTION WITH KLC1</scope>
    <scope>TISSUE SPECIFICITY</scope>
    <scope>DEVELOPMENTAL STAGE</scope>
    <scope>MUTAGENESIS OF GLU-900; MET-901; ASP-902; TRP-903; ASP-904; ASP-905 AND TRP-972</scope>
</reference>
<reference key="9">
    <citation type="journal article" date="2007" name="EMBO J.">
        <title>The novel cargo Alcadein induces vesicle association of kinesin-1 motor components and activates axonal transport.</title>
        <authorList>
            <person name="Araki Y."/>
            <person name="Kawano T."/>
            <person name="Taru H."/>
            <person name="Saito Y."/>
            <person name="Wada S."/>
            <person name="Miyamoto K."/>
            <person name="Kobayashi H."/>
            <person name="Ishikawa H.O."/>
            <person name="Ohsugi Y."/>
            <person name="Yamamoto T."/>
            <person name="Matsuno K."/>
            <person name="Kinjo M."/>
            <person name="Suzuki T."/>
        </authorList>
    </citation>
    <scope>FUNCTION</scope>
    <scope>INTERACTION WITH KLC1 AND APBB1</scope>
    <scope>SUBCELLULAR LOCATION</scope>
    <scope>GLYCOSYLATION</scope>
</reference>
<reference key="10">
    <citation type="journal article" date="2010" name="Cell">
        <title>A tissue-specific atlas of mouse protein phosphorylation and expression.</title>
        <authorList>
            <person name="Huttlin E.L."/>
            <person name="Jedrychowski M.P."/>
            <person name="Elias J.E."/>
            <person name="Goswami T."/>
            <person name="Rad R."/>
            <person name="Beausoleil S.A."/>
            <person name="Villen J."/>
            <person name="Haas W."/>
            <person name="Sowa M.E."/>
            <person name="Gygi S.P."/>
        </authorList>
    </citation>
    <scope>IDENTIFICATION BY MASS SPECTROMETRY [LARGE SCALE ANALYSIS]</scope>
    <source>
        <tissue>Brain</tissue>
        <tissue>Lung</tissue>
    </source>
</reference>
<reference key="11">
    <citation type="journal article" date="2014" name="Cell Rep.">
        <title>Calsyntenins function as synaptogenic adhesion molecules in concert with neurexins.</title>
        <authorList>
            <person name="Um J.W."/>
            <person name="Pramanik G."/>
            <person name="Ko J.S."/>
            <person name="Song M.Y."/>
            <person name="Lee D."/>
            <person name="Kim H."/>
            <person name="Park K.S."/>
            <person name="Suedhof T.C."/>
            <person name="Tabuchi K."/>
            <person name="Ko J."/>
        </authorList>
    </citation>
    <scope>FUNCTION</scope>
    <scope>SUBCELLULAR LOCATION</scope>
</reference>
<reference key="12">
    <citation type="journal article" date="2022" name="Mol. Brain">
        <title>Loss of calsyntenin paralogs disrupts interneuron stability and mouse behavior.</title>
        <authorList>
            <person name="Mori K."/>
            <person name="Koebis M."/>
            <person name="Nakao K."/>
            <person name="Kobayashi S."/>
            <person name="Kiyama Y."/>
            <person name="Watanabe M."/>
            <person name="Manabe T."/>
            <person name="Iino Y."/>
            <person name="Aiba A."/>
        </authorList>
    </citation>
    <scope>DISRUPTION PHENOTYPE</scope>
</reference>
<name>CSTN1_MOUSE</name>
<accession>Q9EPL2</accession>
<accession>A2A800</accession>
<accession>B2KFP1</accession>
<accession>B2KFP2</accession>
<accession>Q69ZV9</accession>
<accession>Q7TS67</accession>
<accession>Q8K103</accession>
<keyword id="KW-0002">3D-structure</keyword>
<keyword id="KW-0025">Alternative splicing</keyword>
<keyword id="KW-0106">Calcium</keyword>
<keyword id="KW-0130">Cell adhesion</keyword>
<keyword id="KW-1003">Cell membrane</keyword>
<keyword id="KW-0966">Cell projection</keyword>
<keyword id="KW-0903">Direct protein sequencing</keyword>
<keyword id="KW-0256">Endoplasmic reticulum</keyword>
<keyword id="KW-0325">Glycoprotein</keyword>
<keyword id="KW-0333">Golgi apparatus</keyword>
<keyword id="KW-0472">Membrane</keyword>
<keyword id="KW-0539">Nucleus</keyword>
<keyword id="KW-0628">Postsynaptic cell membrane</keyword>
<keyword id="KW-1185">Reference proteome</keyword>
<keyword id="KW-0677">Repeat</keyword>
<keyword id="KW-0732">Signal</keyword>
<keyword id="KW-0770">Synapse</keyword>
<keyword id="KW-0812">Transmembrane</keyword>
<keyword id="KW-1133">Transmembrane helix</keyword>
<organism>
    <name type="scientific">Mus musculus</name>
    <name type="common">Mouse</name>
    <dbReference type="NCBI Taxonomy" id="10090"/>
    <lineage>
        <taxon>Eukaryota</taxon>
        <taxon>Metazoa</taxon>
        <taxon>Chordata</taxon>
        <taxon>Craniata</taxon>
        <taxon>Vertebrata</taxon>
        <taxon>Euteleostomi</taxon>
        <taxon>Mammalia</taxon>
        <taxon>Eutheria</taxon>
        <taxon>Euarchontoglires</taxon>
        <taxon>Glires</taxon>
        <taxon>Rodentia</taxon>
        <taxon>Myomorpha</taxon>
        <taxon>Muroidea</taxon>
        <taxon>Muridae</taxon>
        <taxon>Murinae</taxon>
        <taxon>Mus</taxon>
        <taxon>Mus</taxon>
    </lineage>
</organism>